<protein>
    <recommendedName>
        <fullName evidence="7">Precursor of CEP11</fullName>
        <shortName evidence="7">PCEP11</shortName>
    </recommendedName>
    <component>
        <recommendedName>
            <fullName evidence="7">C-terminally encoded peptide 11</fullName>
            <shortName evidence="7">CEP11</shortName>
        </recommendedName>
    </component>
</protein>
<evidence type="ECO:0000250" key="1">
    <source>
        <dbReference type="UniProtKB" id="O80460"/>
    </source>
</evidence>
<evidence type="ECO:0000250" key="2">
    <source>
        <dbReference type="UniProtKB" id="Q058G9"/>
    </source>
</evidence>
<evidence type="ECO:0000250" key="3">
    <source>
        <dbReference type="UniProtKB" id="Q8L8Y3"/>
    </source>
</evidence>
<evidence type="ECO:0000255" key="4"/>
<evidence type="ECO:0000256" key="5">
    <source>
        <dbReference type="SAM" id="MobiDB-lite"/>
    </source>
</evidence>
<evidence type="ECO:0000269" key="6">
    <source>
    </source>
</evidence>
<evidence type="ECO:0000303" key="7">
    <source>
    </source>
</evidence>
<evidence type="ECO:0000305" key="8"/>
<evidence type="ECO:0000312" key="9">
    <source>
        <dbReference type="Araport" id="AT2G23445"/>
    </source>
</evidence>
<sequence>MAKTRRVIYLFLTIVLLFCELIDEAQGSRFRCHHSEDYSCKKRSSHHHHHHHHHQQQQHHHKDTPPEELQGSIKTRRSKDIYGLNAFRSTEPGHSPGVGHLIKT</sequence>
<gene>
    <name evidence="7" type="primary">CEP11</name>
    <name evidence="9" type="ordered locus">At2g23445</name>
    <name evidence="8" type="ORF">F26B6</name>
</gene>
<feature type="signal peptide" evidence="4">
    <location>
        <begin position="1"/>
        <end position="27"/>
    </location>
</feature>
<feature type="propeptide" id="PRO_0000440004" evidence="8">
    <location>
        <begin position="28"/>
        <end position="85"/>
    </location>
</feature>
<feature type="peptide" id="PRO_0000440005" description="C-terminally encoded peptide 11" evidence="2">
    <location>
        <begin position="86"/>
        <end position="100"/>
    </location>
</feature>
<feature type="propeptide" id="PRO_0000440006" evidence="8">
    <location>
        <begin position="101"/>
        <end position="104"/>
    </location>
</feature>
<feature type="region of interest" description="Disordered" evidence="5">
    <location>
        <begin position="37"/>
        <end position="104"/>
    </location>
</feature>
<feature type="compositionally biased region" description="Basic residues" evidence="5">
    <location>
        <begin position="41"/>
        <end position="62"/>
    </location>
</feature>
<feature type="modified residue" description="Hydroxyproline" evidence="2">
    <location>
        <position position="92"/>
    </location>
</feature>
<feature type="modified residue" description="Hydroxyproline" evidence="3">
    <location>
        <position position="96"/>
    </location>
</feature>
<feature type="sequence conflict" description="In Ref. 3; DR354022/DR380230." evidence="8" ref="3">
    <original>S</original>
    <variation>SHHH</variation>
    <location>
        <position position="45"/>
    </location>
</feature>
<proteinExistence type="evidence at transcript level"/>
<keyword id="KW-0052">Apoplast</keyword>
<keyword id="KW-0217">Developmental protein</keyword>
<keyword id="KW-0372">Hormone</keyword>
<keyword id="KW-0379">Hydroxylation</keyword>
<keyword id="KW-1185">Reference proteome</keyword>
<keyword id="KW-0964">Secreted</keyword>
<keyword id="KW-0732">Signal</keyword>
<reference key="1">
    <citation type="journal article" date="1999" name="Nature">
        <title>Sequence and analysis of chromosome 2 of the plant Arabidopsis thaliana.</title>
        <authorList>
            <person name="Lin X."/>
            <person name="Kaul S."/>
            <person name="Rounsley S.D."/>
            <person name="Shea T.P."/>
            <person name="Benito M.-I."/>
            <person name="Town C.D."/>
            <person name="Fujii C.Y."/>
            <person name="Mason T.M."/>
            <person name="Bowman C.L."/>
            <person name="Barnstead M.E."/>
            <person name="Feldblyum T.V."/>
            <person name="Buell C.R."/>
            <person name="Ketchum K.A."/>
            <person name="Lee J.J."/>
            <person name="Ronning C.M."/>
            <person name="Koo H.L."/>
            <person name="Moffat K.S."/>
            <person name="Cronin L.A."/>
            <person name="Shen M."/>
            <person name="Pai G."/>
            <person name="Van Aken S."/>
            <person name="Umayam L."/>
            <person name="Tallon L.J."/>
            <person name="Gill J.E."/>
            <person name="Adams M.D."/>
            <person name="Carrera A.J."/>
            <person name="Creasy T.H."/>
            <person name="Goodman H.M."/>
            <person name="Somerville C.R."/>
            <person name="Copenhaver G.P."/>
            <person name="Preuss D."/>
            <person name="Nierman W.C."/>
            <person name="White O."/>
            <person name="Eisen J.A."/>
            <person name="Salzberg S.L."/>
            <person name="Fraser C.M."/>
            <person name="Venter J.C."/>
        </authorList>
    </citation>
    <scope>NUCLEOTIDE SEQUENCE [LARGE SCALE GENOMIC DNA]</scope>
    <source>
        <strain>cv. Columbia</strain>
    </source>
</reference>
<reference key="2">
    <citation type="journal article" date="2017" name="Plant J.">
        <title>Araport11: a complete reannotation of the Arabidopsis thaliana reference genome.</title>
        <authorList>
            <person name="Cheng C.Y."/>
            <person name="Krishnakumar V."/>
            <person name="Chan A.P."/>
            <person name="Thibaud-Nissen F."/>
            <person name="Schobel S."/>
            <person name="Town C.D."/>
        </authorList>
    </citation>
    <scope>GENOME REANNOTATION</scope>
    <source>
        <strain>cv. Columbia</strain>
    </source>
</reference>
<reference key="3">
    <citation type="submission" date="2002-03" db="EMBL/GenBank/DDBJ databases">
        <title>Full-length cDNA from Arabidopsis thaliana.</title>
        <authorList>
            <person name="Brover V.V."/>
            <person name="Troukhan M.E."/>
            <person name="Alexandrov N.A."/>
            <person name="Lu Y.-P."/>
            <person name="Flavell R.B."/>
            <person name="Feldmann K.A."/>
        </authorList>
    </citation>
    <scope>NUCLEOTIDE SEQUENCE [LARGE SCALE MRNA]</scope>
</reference>
<reference key="4">
    <citation type="journal article" date="2013" name="J. Exp. Bot.">
        <title>The CEP family in land plants: evolutionary analyses, expression studies, and role in Arabidopsis shoot development.</title>
        <authorList>
            <person name="Roberts I."/>
            <person name="Smith S."/>
            <person name="De Rybel B."/>
            <person name="Van Den Broeke J."/>
            <person name="Smet W."/>
            <person name="De Cokere S."/>
            <person name="Mispelaere M."/>
            <person name="De Smet I."/>
            <person name="Beeckman T."/>
        </authorList>
    </citation>
    <scope>GENE FAMILY</scope>
    <source>
        <strain>cv. Columbia</strain>
    </source>
</reference>
<reference key="5">
    <citation type="journal article" date="2013" name="J. Exp. Bot.">
        <title>CEP genes regulate root and shoot development in response to environmental cues and are specific to seed plants.</title>
        <authorList>
            <person name="Delay C."/>
            <person name="Imin N."/>
            <person name="Djordjevic M.A."/>
        </authorList>
    </citation>
    <scope>GENE FAMILY</scope>
    <scope>NOMENCLATURE</scope>
    <source>
        <strain>cv. Columbia</strain>
    </source>
</reference>
<reference key="6">
    <citation type="journal article" date="2014" name="Science">
        <title>Perception of root-derived peptides by shoot LRR-RKs mediates systemic N-demand signaling.</title>
        <authorList>
            <person name="Tabata R."/>
            <person name="Sumida K."/>
            <person name="Yoshii T."/>
            <person name="Ohyama K."/>
            <person name="Shinohara H."/>
            <person name="Matsubayashi Y."/>
        </authorList>
    </citation>
    <scope>FUNCTION</scope>
    <scope>TISSUE SPECIFICITY</scope>
    <source>
        <strain>cv. No-0</strain>
    </source>
</reference>
<organism>
    <name type="scientific">Arabidopsis thaliana</name>
    <name type="common">Mouse-ear cress</name>
    <dbReference type="NCBI Taxonomy" id="3702"/>
    <lineage>
        <taxon>Eukaryota</taxon>
        <taxon>Viridiplantae</taxon>
        <taxon>Streptophyta</taxon>
        <taxon>Embryophyta</taxon>
        <taxon>Tracheophyta</taxon>
        <taxon>Spermatophyta</taxon>
        <taxon>Magnoliopsida</taxon>
        <taxon>eudicotyledons</taxon>
        <taxon>Gunneridae</taxon>
        <taxon>Pentapetalae</taxon>
        <taxon>rosids</taxon>
        <taxon>malvids</taxon>
        <taxon>Brassicales</taxon>
        <taxon>Brassicaceae</taxon>
        <taxon>Camelineae</taxon>
        <taxon>Arabidopsis</taxon>
    </lineage>
</organism>
<dbReference type="EMBL" id="AC003040">
    <property type="status" value="NOT_ANNOTATED_CDS"/>
    <property type="molecule type" value="Genomic_DNA"/>
</dbReference>
<dbReference type="EMBL" id="CP002685">
    <property type="protein sequence ID" value="ANM61833.1"/>
    <property type="status" value="ALT_SEQ"/>
    <property type="molecule type" value="Genomic_DNA"/>
</dbReference>
<dbReference type="EMBL" id="DR354022">
    <property type="status" value="NOT_ANNOTATED_CDS"/>
    <property type="molecule type" value="mRNA"/>
</dbReference>
<dbReference type="EMBL" id="DR380230">
    <property type="status" value="NOT_ANNOTATED_CDS"/>
    <property type="molecule type" value="mRNA"/>
</dbReference>
<dbReference type="RefSeq" id="NP_001324028.1">
    <property type="nucleotide sequence ID" value="NM_001335852.1"/>
</dbReference>
<dbReference type="STRING" id="3702.P0DN98"/>
<dbReference type="GeneID" id="28718295"/>
<dbReference type="KEGG" id="ath:AT2G23445"/>
<dbReference type="Araport" id="AT2G23445"/>
<dbReference type="TAIR" id="AT2G23445"/>
<dbReference type="InParanoid" id="P0DN98"/>
<dbReference type="PRO" id="PR:P0DN98"/>
<dbReference type="Proteomes" id="UP000006548">
    <property type="component" value="Chromosome 2"/>
</dbReference>
<dbReference type="ExpressionAtlas" id="P0DN98">
    <property type="expression patterns" value="baseline and differential"/>
</dbReference>
<dbReference type="GO" id="GO:0048046">
    <property type="term" value="C:apoplast"/>
    <property type="evidence" value="ECO:0000250"/>
    <property type="project" value="UniProtKB"/>
</dbReference>
<dbReference type="GO" id="GO:0005576">
    <property type="term" value="C:extracellular region"/>
    <property type="evidence" value="ECO:0000318"/>
    <property type="project" value="GO_Central"/>
</dbReference>
<dbReference type="GO" id="GO:0005179">
    <property type="term" value="F:hormone activity"/>
    <property type="evidence" value="ECO:0000250"/>
    <property type="project" value="UniProtKB"/>
</dbReference>
<dbReference type="GO" id="GO:1902025">
    <property type="term" value="P:nitrate import"/>
    <property type="evidence" value="ECO:0000314"/>
    <property type="project" value="UniProtKB"/>
</dbReference>
<dbReference type="GO" id="GO:1901371">
    <property type="term" value="P:regulation of leaf morphogenesis"/>
    <property type="evidence" value="ECO:0000318"/>
    <property type="project" value="GO_Central"/>
</dbReference>
<dbReference type="GO" id="GO:2000280">
    <property type="term" value="P:regulation of root development"/>
    <property type="evidence" value="ECO:0000250"/>
    <property type="project" value="UniProtKB"/>
</dbReference>
<name>PCP11_ARATH</name>
<comment type="function">
    <text evidence="3 6">Extracellular signaling peptide that may regulate primary root growth rate and systemic nitrogen (N)-demand signaling (By similarity). Mediates up-regulation of genes involved in N uptake and assimilation pathways (PubMed:25324386).</text>
</comment>
<comment type="subunit">
    <text evidence="3">Interacts with CEP receptors (e.g. CEPR1 and CEPR2).</text>
</comment>
<comment type="subcellular location">
    <molecule>C-terminally encoded peptide 11</molecule>
    <subcellularLocation>
        <location evidence="1">Secreted</location>
        <location evidence="1">Extracellular space</location>
        <location evidence="1">Apoplast</location>
    </subcellularLocation>
    <text evidence="1">Accumulates in xylem sap.</text>
</comment>
<comment type="tissue specificity">
    <text evidence="6">Expressed in lateral root primordia and in lateral roots excluding the meristem region.</text>
</comment>
<comment type="PTM">
    <text evidence="3">The mature small signaling peptide is generated by proteolytic processing of the longer precursor.</text>
</comment>
<comment type="similarity">
    <text evidence="8">Belongs to the C-terminally encoded plant signaling peptide (CEP) family.</text>
</comment>
<comment type="sequence caution" evidence="8">
    <conflict type="erroneous gene model prediction">
        <sequence resource="EMBL-CDS" id="ANM61833"/>
    </conflict>
</comment>
<accession>P0DN98</accession>
<accession>A0A1P8AYZ5</accession>